<accession>Q6R8G2</accession>
<accession>Q9C7H9</accession>
<name>PHO18_ARATH</name>
<dbReference type="EMBL" id="AY507960">
    <property type="protein sequence ID" value="AAR99490.1"/>
    <property type="molecule type" value="mRNA"/>
</dbReference>
<dbReference type="EMBL" id="AC069160">
    <property type="protein sequence ID" value="AAG51461.1"/>
    <property type="status" value="ALT_SEQ"/>
    <property type="molecule type" value="Genomic_DNA"/>
</dbReference>
<dbReference type="EMBL" id="CP002684">
    <property type="protein sequence ID" value="AEE31785.1"/>
    <property type="molecule type" value="Genomic_DNA"/>
</dbReference>
<dbReference type="PIR" id="F86474">
    <property type="entry name" value="F86474"/>
</dbReference>
<dbReference type="RefSeq" id="NP_174768.2">
    <property type="nucleotide sequence ID" value="NM_103232.3"/>
</dbReference>
<dbReference type="SMR" id="Q6R8G2"/>
<dbReference type="BioGRID" id="25656">
    <property type="interactions" value="1"/>
</dbReference>
<dbReference type="FunCoup" id="Q6R8G2">
    <property type="interactions" value="2581"/>
</dbReference>
<dbReference type="STRING" id="3702.Q6R8G2"/>
<dbReference type="iPTMnet" id="Q6R8G2"/>
<dbReference type="PaxDb" id="3702-AT1G35350.1"/>
<dbReference type="ProteomicsDB" id="236157"/>
<dbReference type="EnsemblPlants" id="AT1G35350.1">
    <property type="protein sequence ID" value="AT1G35350.1"/>
    <property type="gene ID" value="AT1G35350"/>
</dbReference>
<dbReference type="GeneID" id="840424"/>
<dbReference type="Gramene" id="AT1G35350.1">
    <property type="protein sequence ID" value="AT1G35350.1"/>
    <property type="gene ID" value="AT1G35350"/>
</dbReference>
<dbReference type="KEGG" id="ath:AT1G35350"/>
<dbReference type="Araport" id="AT1G35350"/>
<dbReference type="TAIR" id="AT1G35350"/>
<dbReference type="eggNOG" id="KOG1162">
    <property type="taxonomic scope" value="Eukaryota"/>
</dbReference>
<dbReference type="HOGENOM" id="CLU_006116_2_0_1"/>
<dbReference type="InParanoid" id="Q6R8G2"/>
<dbReference type="PhylomeDB" id="Q6R8G2"/>
<dbReference type="PRO" id="PR:Q6R8G2"/>
<dbReference type="Proteomes" id="UP000006548">
    <property type="component" value="Chromosome 1"/>
</dbReference>
<dbReference type="ExpressionAtlas" id="Q6R8G2">
    <property type="expression patterns" value="baseline and differential"/>
</dbReference>
<dbReference type="GO" id="GO:0005886">
    <property type="term" value="C:plasma membrane"/>
    <property type="evidence" value="ECO:0007669"/>
    <property type="project" value="UniProtKB-SubCell"/>
</dbReference>
<dbReference type="GO" id="GO:0006817">
    <property type="term" value="P:phosphate ion transport"/>
    <property type="evidence" value="ECO:0007669"/>
    <property type="project" value="UniProtKB-KW"/>
</dbReference>
<dbReference type="CDD" id="cd14476">
    <property type="entry name" value="SPX_PHO1_like"/>
    <property type="match status" value="1"/>
</dbReference>
<dbReference type="InterPro" id="IPR004342">
    <property type="entry name" value="EXS_C"/>
</dbReference>
<dbReference type="InterPro" id="IPR034092">
    <property type="entry name" value="PHO1_SPX"/>
</dbReference>
<dbReference type="InterPro" id="IPR004331">
    <property type="entry name" value="SPX_dom"/>
</dbReference>
<dbReference type="PANTHER" id="PTHR10783:SF98">
    <property type="entry name" value="PHOSPHATE TRANSPORTER PHO1 HOMOLOG 7-RELATED"/>
    <property type="match status" value="1"/>
</dbReference>
<dbReference type="PANTHER" id="PTHR10783">
    <property type="entry name" value="XENOTROPIC AND POLYTROPIC RETROVIRUS RECEPTOR 1-RELATED"/>
    <property type="match status" value="1"/>
</dbReference>
<dbReference type="Pfam" id="PF03124">
    <property type="entry name" value="EXS"/>
    <property type="match status" value="1"/>
</dbReference>
<dbReference type="Pfam" id="PF03105">
    <property type="entry name" value="SPX"/>
    <property type="match status" value="1"/>
</dbReference>
<dbReference type="PROSITE" id="PS51380">
    <property type="entry name" value="EXS"/>
    <property type="match status" value="1"/>
</dbReference>
<dbReference type="PROSITE" id="PS51382">
    <property type="entry name" value="SPX"/>
    <property type="match status" value="1"/>
</dbReference>
<proteinExistence type="evidence at transcript level"/>
<feature type="chain" id="PRO_0000398162" description="Phosphate transporter PHO1 homolog 8">
    <location>
        <begin position="1"/>
        <end position="751"/>
    </location>
</feature>
<feature type="topological domain" description="Cytoplasmic" evidence="2">
    <location>
        <begin position="1"/>
        <end position="351"/>
    </location>
</feature>
<feature type="transmembrane region" description="Helical" evidence="2">
    <location>
        <begin position="352"/>
        <end position="372"/>
    </location>
</feature>
<feature type="topological domain" description="Extracellular" evidence="2">
    <location>
        <begin position="373"/>
        <end position="392"/>
    </location>
</feature>
<feature type="transmembrane region" description="Helical" evidence="2">
    <location>
        <begin position="393"/>
        <end position="413"/>
    </location>
</feature>
<feature type="topological domain" description="Cytoplasmic" evidence="2">
    <location>
        <begin position="414"/>
        <end position="434"/>
    </location>
</feature>
<feature type="transmembrane region" description="Helical" evidence="2">
    <location>
        <begin position="435"/>
        <end position="455"/>
    </location>
</feature>
<feature type="topological domain" description="Extracellular" evidence="2">
    <location>
        <begin position="456"/>
        <end position="473"/>
    </location>
</feature>
<feature type="transmembrane region" description="Helical" evidence="2">
    <location>
        <begin position="474"/>
        <end position="494"/>
    </location>
</feature>
<feature type="topological domain" description="Cytoplasmic" evidence="2">
    <location>
        <begin position="495"/>
        <end position="623"/>
    </location>
</feature>
<feature type="transmembrane region" description="Helical" evidence="2">
    <location>
        <begin position="624"/>
        <end position="644"/>
    </location>
</feature>
<feature type="topological domain" description="Extracellular" evidence="2">
    <location>
        <begin position="645"/>
        <end position="667"/>
    </location>
</feature>
<feature type="transmembrane region" description="Helical" evidence="2">
    <location>
        <begin position="668"/>
        <end position="688"/>
    </location>
</feature>
<feature type="topological domain" description="Cytoplasmic" evidence="2">
    <location>
        <begin position="689"/>
        <end position="751"/>
    </location>
</feature>
<feature type="domain" description="SPX" evidence="4">
    <location>
        <begin position="1"/>
        <end position="299"/>
    </location>
</feature>
<feature type="domain" description="EXS" evidence="3">
    <location>
        <begin position="558"/>
        <end position="751"/>
    </location>
</feature>
<sequence length="751" mass="87396">MKFGKEYVAQMIPEWQQAYMDYTCLKTILREIKTSQKRSESQGVLKRKLSGRRNFSGLTKRYSRTFSSRDLENHDIMVHATTGDDGFEKYETTILKVSEVGRESELVFFKTLDLEFDKVNRFYRSNVEELVKEAVVLNRQMDALIAYRIKLDQPSTSWSCSETVSVDINALDSKEQKGKTLAEEMGIKVEENVSNGGDSTKETAPEALSVLDRIRLNKNQENPLSTIRNVLKLSNKEDIKFTKENLKKIEERLKNVFIEFYRKLRHLKNYSFLNTLAISKIMKKYDKIALRNAAKLYMEMVDKSYLTSSDEINKLMLRVESIFVEHFAGSNRSKGMNLLRPKVTKEKHRITFSTGFFVGCTVSLVIALGLFIHARNIMGAVGHKLYMETMFPLYSLFAFVVLHMIMYASNIYFWKRYRVNYPFIFGFKEGTELGYGHVLLLSFGLGTLALCAVLVNMDMEMDPNTNDYKTITELVPLFVVALVIAISVCPFNIFYRSSRFFFLMVLFRCIAAPLYKVNLPDFFLADQLTSQVQALRSLEFYICYYGWGDFKQRQSTCKSSDVYSTFYFIVAVIPYWSRFLQCVRRLIEEKDVSQGFNALKYLLTIVAVCLRTAFSINRGNDWKIAAWVFSGLATFYGTYWDIVYDWGLLHRPSKSWLREKLLVPHKSVYYVAMVVNVVLRLAWLQTVLDFNISFLHRETMVALIAILEIIRRGIWNFFRLENEHLNNVGKFRAFKSVPLPFNYDEEEDRDS</sequence>
<comment type="function">
    <text evidence="1">May transport inorganic phosphate (Pi).</text>
</comment>
<comment type="subcellular location">
    <subcellularLocation>
        <location evidence="6">Cell membrane</location>
        <topology evidence="6">Multi-pass membrane protein</topology>
    </subcellularLocation>
</comment>
<comment type="tissue specificity">
    <text evidence="5">Expressed in root epidermis, leaf hydathodes, trichomes and petioles, stem vascular cylinder, receptacle, stigma apex and pollen grains.</text>
</comment>
<comment type="induction">
    <text evidence="5">Not induced by Pi deficiency.</text>
</comment>
<comment type="similarity">
    <text evidence="6">Belongs to the SYG1 (TC 2.A.94) family.</text>
</comment>
<comment type="sequence caution" evidence="6">
    <conflict type="erroneous gene model prediction">
        <sequence resource="EMBL-CDS" id="AAG51461"/>
    </conflict>
</comment>
<protein>
    <recommendedName>
        <fullName>Phosphate transporter PHO1 homolog 8</fullName>
    </recommendedName>
    <alternativeName>
        <fullName>Protein PHO1 homolog 8</fullName>
        <shortName>AtPHO1;H8</shortName>
    </alternativeName>
</protein>
<organism>
    <name type="scientific">Arabidopsis thaliana</name>
    <name type="common">Mouse-ear cress</name>
    <dbReference type="NCBI Taxonomy" id="3702"/>
    <lineage>
        <taxon>Eukaryota</taxon>
        <taxon>Viridiplantae</taxon>
        <taxon>Streptophyta</taxon>
        <taxon>Embryophyta</taxon>
        <taxon>Tracheophyta</taxon>
        <taxon>Spermatophyta</taxon>
        <taxon>Magnoliopsida</taxon>
        <taxon>eudicotyledons</taxon>
        <taxon>Gunneridae</taxon>
        <taxon>Pentapetalae</taxon>
        <taxon>rosids</taxon>
        <taxon>malvids</taxon>
        <taxon>Brassicales</taxon>
        <taxon>Brassicaceae</taxon>
        <taxon>Camelineae</taxon>
        <taxon>Arabidopsis</taxon>
    </lineage>
</organism>
<evidence type="ECO:0000250" key="1"/>
<evidence type="ECO:0000255" key="2"/>
<evidence type="ECO:0000255" key="3">
    <source>
        <dbReference type="PROSITE-ProRule" id="PRU00712"/>
    </source>
</evidence>
<evidence type="ECO:0000255" key="4">
    <source>
        <dbReference type="PROSITE-ProRule" id="PRU00714"/>
    </source>
</evidence>
<evidence type="ECO:0000269" key="5">
    <source>
    </source>
</evidence>
<evidence type="ECO:0000305" key="6"/>
<reference key="1">
    <citation type="journal article" date="2004" name="Plant Physiol.">
        <title>Structure and expression profile of the Arabidopsis PHO1 gene family indicates a broad role in inorganic phosphate homeostasis.</title>
        <authorList>
            <person name="Wang Y."/>
            <person name="Ribot C."/>
            <person name="Rezzonico E."/>
            <person name="Poirier Y."/>
        </authorList>
    </citation>
    <scope>NUCLEOTIDE SEQUENCE [MRNA]</scope>
    <scope>TISSUE SPECIFICITY</scope>
    <scope>INDUCTION</scope>
    <scope>GENE FAMILY</scope>
    <scope>NOMENCLATURE</scope>
</reference>
<reference key="2">
    <citation type="journal article" date="2000" name="Nature">
        <title>Sequence and analysis of chromosome 1 of the plant Arabidopsis thaliana.</title>
        <authorList>
            <person name="Theologis A."/>
            <person name="Ecker J.R."/>
            <person name="Palm C.J."/>
            <person name="Federspiel N.A."/>
            <person name="Kaul S."/>
            <person name="White O."/>
            <person name="Alonso J."/>
            <person name="Altafi H."/>
            <person name="Araujo R."/>
            <person name="Bowman C.L."/>
            <person name="Brooks S.Y."/>
            <person name="Buehler E."/>
            <person name="Chan A."/>
            <person name="Chao Q."/>
            <person name="Chen H."/>
            <person name="Cheuk R.F."/>
            <person name="Chin C.W."/>
            <person name="Chung M.K."/>
            <person name="Conn L."/>
            <person name="Conway A.B."/>
            <person name="Conway A.R."/>
            <person name="Creasy T.H."/>
            <person name="Dewar K."/>
            <person name="Dunn P."/>
            <person name="Etgu P."/>
            <person name="Feldblyum T.V."/>
            <person name="Feng J.-D."/>
            <person name="Fong B."/>
            <person name="Fujii C.Y."/>
            <person name="Gill J.E."/>
            <person name="Goldsmith A.D."/>
            <person name="Haas B."/>
            <person name="Hansen N.F."/>
            <person name="Hughes B."/>
            <person name="Huizar L."/>
            <person name="Hunter J.L."/>
            <person name="Jenkins J."/>
            <person name="Johnson-Hopson C."/>
            <person name="Khan S."/>
            <person name="Khaykin E."/>
            <person name="Kim C.J."/>
            <person name="Koo H.L."/>
            <person name="Kremenetskaia I."/>
            <person name="Kurtz D.B."/>
            <person name="Kwan A."/>
            <person name="Lam B."/>
            <person name="Langin-Hooper S."/>
            <person name="Lee A."/>
            <person name="Lee J.M."/>
            <person name="Lenz C.A."/>
            <person name="Li J.H."/>
            <person name="Li Y.-P."/>
            <person name="Lin X."/>
            <person name="Liu S.X."/>
            <person name="Liu Z.A."/>
            <person name="Luros J.S."/>
            <person name="Maiti R."/>
            <person name="Marziali A."/>
            <person name="Militscher J."/>
            <person name="Miranda M."/>
            <person name="Nguyen M."/>
            <person name="Nierman W.C."/>
            <person name="Osborne B.I."/>
            <person name="Pai G."/>
            <person name="Peterson J."/>
            <person name="Pham P.K."/>
            <person name="Rizzo M."/>
            <person name="Rooney T."/>
            <person name="Rowley D."/>
            <person name="Sakano H."/>
            <person name="Salzberg S.L."/>
            <person name="Schwartz J.R."/>
            <person name="Shinn P."/>
            <person name="Southwick A.M."/>
            <person name="Sun H."/>
            <person name="Tallon L.J."/>
            <person name="Tambunga G."/>
            <person name="Toriumi M.J."/>
            <person name="Town C.D."/>
            <person name="Utterback T."/>
            <person name="Van Aken S."/>
            <person name="Vaysberg M."/>
            <person name="Vysotskaia V.S."/>
            <person name="Walker M."/>
            <person name="Wu D."/>
            <person name="Yu G."/>
            <person name="Fraser C.M."/>
            <person name="Venter J.C."/>
            <person name="Davis R.W."/>
        </authorList>
    </citation>
    <scope>NUCLEOTIDE SEQUENCE [LARGE SCALE GENOMIC DNA]</scope>
    <source>
        <strain>cv. Columbia</strain>
    </source>
</reference>
<reference key="3">
    <citation type="journal article" date="2017" name="Plant J.">
        <title>Araport11: a complete reannotation of the Arabidopsis thaliana reference genome.</title>
        <authorList>
            <person name="Cheng C.Y."/>
            <person name="Krishnakumar V."/>
            <person name="Chan A.P."/>
            <person name="Thibaud-Nissen F."/>
            <person name="Schobel S."/>
            <person name="Town C.D."/>
        </authorList>
    </citation>
    <scope>GENOME REANNOTATION</scope>
    <source>
        <strain>cv. Columbia</strain>
    </source>
</reference>
<gene>
    <name type="primary">PHO1-H8</name>
    <name type="ordered locus">At1g35350</name>
    <name type="ORF">T9I1.12</name>
</gene>
<keyword id="KW-1003">Cell membrane</keyword>
<keyword id="KW-0472">Membrane</keyword>
<keyword id="KW-0592">Phosphate transport</keyword>
<keyword id="KW-1185">Reference proteome</keyword>
<keyword id="KW-0812">Transmembrane</keyword>
<keyword id="KW-1133">Transmembrane helix</keyword>
<keyword id="KW-0813">Transport</keyword>